<accession>Q8YJJ7</accession>
<proteinExistence type="inferred from homology"/>
<keyword id="KW-0028">Amino-acid biosynthesis</keyword>
<keyword id="KW-0055">Arginine biosynthesis</keyword>
<keyword id="KW-0963">Cytoplasm</keyword>
<keyword id="KW-0456">Lyase</keyword>
<evidence type="ECO:0000255" key="1">
    <source>
        <dbReference type="HAMAP-Rule" id="MF_00006"/>
    </source>
</evidence>
<name>ARLY_BRUME</name>
<organism>
    <name type="scientific">Brucella melitensis biotype 1 (strain ATCC 23456 / CCUG 17765 / NCTC 10094 / 16M)</name>
    <dbReference type="NCBI Taxonomy" id="224914"/>
    <lineage>
        <taxon>Bacteria</taxon>
        <taxon>Pseudomonadati</taxon>
        <taxon>Pseudomonadota</taxon>
        <taxon>Alphaproteobacteria</taxon>
        <taxon>Hyphomicrobiales</taxon>
        <taxon>Brucellaceae</taxon>
        <taxon>Brucella/Ochrobactrum group</taxon>
        <taxon>Brucella</taxon>
    </lineage>
</organism>
<comment type="catalytic activity">
    <reaction evidence="1">
        <text>2-(N(omega)-L-arginino)succinate = fumarate + L-arginine</text>
        <dbReference type="Rhea" id="RHEA:24020"/>
        <dbReference type="ChEBI" id="CHEBI:29806"/>
        <dbReference type="ChEBI" id="CHEBI:32682"/>
        <dbReference type="ChEBI" id="CHEBI:57472"/>
        <dbReference type="EC" id="4.3.2.1"/>
    </reaction>
</comment>
<comment type="pathway">
    <text evidence="1">Amino-acid biosynthesis; L-arginine biosynthesis; L-arginine from L-ornithine and carbamoyl phosphate: step 3/3.</text>
</comment>
<comment type="subcellular location">
    <subcellularLocation>
        <location evidence="1">Cytoplasm</location>
    </subcellularLocation>
</comment>
<comment type="similarity">
    <text evidence="1">Belongs to the lyase 1 family. Argininosuccinate lyase subfamily.</text>
</comment>
<gene>
    <name evidence="1" type="primary">argH</name>
    <name type="ordered locus">BMEI0086</name>
</gene>
<reference key="1">
    <citation type="journal article" date="2002" name="Proc. Natl. Acad. Sci. U.S.A.">
        <title>The genome sequence of the facultative intracellular pathogen Brucella melitensis.</title>
        <authorList>
            <person name="DelVecchio V.G."/>
            <person name="Kapatral V."/>
            <person name="Redkar R.J."/>
            <person name="Patra G."/>
            <person name="Mujer C."/>
            <person name="Los T."/>
            <person name="Ivanova N."/>
            <person name="Anderson I."/>
            <person name="Bhattacharyya A."/>
            <person name="Lykidis A."/>
            <person name="Reznik G."/>
            <person name="Jablonski L."/>
            <person name="Larsen N."/>
            <person name="D'Souza M."/>
            <person name="Bernal A."/>
            <person name="Mazur M."/>
            <person name="Goltsman E."/>
            <person name="Selkov E."/>
            <person name="Elzer P.H."/>
            <person name="Hagius S."/>
            <person name="O'Callaghan D."/>
            <person name="Letesson J.-J."/>
            <person name="Haselkorn R."/>
            <person name="Kyrpides N.C."/>
            <person name="Overbeek R."/>
        </authorList>
    </citation>
    <scope>NUCLEOTIDE SEQUENCE [LARGE SCALE GENOMIC DNA]</scope>
    <source>
        <strain>ATCC 23456 / CCUG 17765 / NCTC 10094 / 16M</strain>
    </source>
</reference>
<feature type="chain" id="PRO_0000137746" description="Argininosuccinate lyase">
    <location>
        <begin position="1"/>
        <end position="466"/>
    </location>
</feature>
<protein>
    <recommendedName>
        <fullName evidence="1">Argininosuccinate lyase</fullName>
        <shortName evidence="1">ASAL</shortName>
        <ecNumber evidence="1">4.3.2.1</ecNumber>
    </recommendedName>
    <alternativeName>
        <fullName evidence="1">Arginosuccinase</fullName>
    </alternativeName>
</protein>
<sequence>MSEQKSSNQMWGGRFASGPDAIMEEINASIGFDRKLYAQDIQGSLAHAAMLAKTGIIAAEDHKQIENGLKTIRKEIEEGKFTFSRKLEDIHMNIEARLAELIGPAAGRLHTARSRNDQVAVDFRLWVKQELEKTAAALKNLIEAFLERAEEHAATVMPGFTHLQTAQPVTFGHHCMAYVEMFGRDLSRVRDAIERIDESPLGAAALAGTGFPIDRHMTAKALGFREPTRNSLDSVSDRDYALEFLSLAAICAGHLSRLAEEIVIWSTPQFNFVRLSDAFSTGSSIMPQKKNPDAAELVRAKTGRINGSLVALLTIMKGLPLAYSKDMQEDKEQVFDAAENLELAIAAMAGMVRDLTVNVAAMKKAAGSGYSTATDLADWLVRTLGLPFREAHHVTGRAVALAESRKVDLAKLSLEELQSINPAITAEVFGYLTVEKSVKSRQSFGGTAPQEVRRQIRYWKKRIAKA</sequence>
<dbReference type="EC" id="4.3.2.1" evidence="1"/>
<dbReference type="EMBL" id="AE008917">
    <property type="protein sequence ID" value="AAL51268.1"/>
    <property type="molecule type" value="Genomic_DNA"/>
</dbReference>
<dbReference type="PIR" id="AI3262">
    <property type="entry name" value="AI3262"/>
</dbReference>
<dbReference type="RefSeq" id="WP_002965047.1">
    <property type="nucleotide sequence ID" value="NZ_GG703778.1"/>
</dbReference>
<dbReference type="SMR" id="Q8YJJ7"/>
<dbReference type="GeneID" id="93017699"/>
<dbReference type="KEGG" id="bme:BMEI0086"/>
<dbReference type="KEGG" id="bmel:DK63_1346"/>
<dbReference type="PATRIC" id="fig|224914.52.peg.1422"/>
<dbReference type="eggNOG" id="COG0165">
    <property type="taxonomic scope" value="Bacteria"/>
</dbReference>
<dbReference type="PhylomeDB" id="Q8YJJ7"/>
<dbReference type="UniPathway" id="UPA00068">
    <property type="reaction ID" value="UER00114"/>
</dbReference>
<dbReference type="Proteomes" id="UP000000419">
    <property type="component" value="Chromosome I"/>
</dbReference>
<dbReference type="GO" id="GO:0005829">
    <property type="term" value="C:cytosol"/>
    <property type="evidence" value="ECO:0007669"/>
    <property type="project" value="TreeGrafter"/>
</dbReference>
<dbReference type="GO" id="GO:0004056">
    <property type="term" value="F:argininosuccinate lyase activity"/>
    <property type="evidence" value="ECO:0007669"/>
    <property type="project" value="UniProtKB-UniRule"/>
</dbReference>
<dbReference type="GO" id="GO:0042450">
    <property type="term" value="P:arginine biosynthetic process via ornithine"/>
    <property type="evidence" value="ECO:0007669"/>
    <property type="project" value="InterPro"/>
</dbReference>
<dbReference type="GO" id="GO:0006526">
    <property type="term" value="P:L-arginine biosynthetic process"/>
    <property type="evidence" value="ECO:0007669"/>
    <property type="project" value="UniProtKB-UniRule"/>
</dbReference>
<dbReference type="CDD" id="cd01359">
    <property type="entry name" value="Argininosuccinate_lyase"/>
    <property type="match status" value="1"/>
</dbReference>
<dbReference type="FunFam" id="1.10.275.10:FF:000002">
    <property type="entry name" value="Argininosuccinate lyase"/>
    <property type="match status" value="1"/>
</dbReference>
<dbReference type="FunFam" id="1.10.40.30:FF:000001">
    <property type="entry name" value="Argininosuccinate lyase"/>
    <property type="match status" value="1"/>
</dbReference>
<dbReference type="FunFam" id="1.20.200.10:FF:000015">
    <property type="entry name" value="argininosuccinate lyase isoform X2"/>
    <property type="match status" value="1"/>
</dbReference>
<dbReference type="Gene3D" id="1.10.40.30">
    <property type="entry name" value="Fumarase/aspartase (C-terminal domain)"/>
    <property type="match status" value="1"/>
</dbReference>
<dbReference type="Gene3D" id="1.20.200.10">
    <property type="entry name" value="Fumarase/aspartase (Central domain)"/>
    <property type="match status" value="1"/>
</dbReference>
<dbReference type="Gene3D" id="1.10.275.10">
    <property type="entry name" value="Fumarase/aspartase (N-terminal domain)"/>
    <property type="match status" value="1"/>
</dbReference>
<dbReference type="HAMAP" id="MF_00006">
    <property type="entry name" value="Arg_succ_lyase"/>
    <property type="match status" value="1"/>
</dbReference>
<dbReference type="InterPro" id="IPR029419">
    <property type="entry name" value="Arg_succ_lyase_C"/>
</dbReference>
<dbReference type="InterPro" id="IPR009049">
    <property type="entry name" value="Argininosuccinate_lyase"/>
</dbReference>
<dbReference type="InterPro" id="IPR024083">
    <property type="entry name" value="Fumarase/histidase_N"/>
</dbReference>
<dbReference type="InterPro" id="IPR020557">
    <property type="entry name" value="Fumarate_lyase_CS"/>
</dbReference>
<dbReference type="InterPro" id="IPR000362">
    <property type="entry name" value="Fumarate_lyase_fam"/>
</dbReference>
<dbReference type="InterPro" id="IPR022761">
    <property type="entry name" value="Fumarate_lyase_N"/>
</dbReference>
<dbReference type="InterPro" id="IPR008948">
    <property type="entry name" value="L-Aspartase-like"/>
</dbReference>
<dbReference type="NCBIfam" id="TIGR00838">
    <property type="entry name" value="argH"/>
    <property type="match status" value="1"/>
</dbReference>
<dbReference type="PANTHER" id="PTHR43814">
    <property type="entry name" value="ARGININOSUCCINATE LYASE"/>
    <property type="match status" value="1"/>
</dbReference>
<dbReference type="PANTHER" id="PTHR43814:SF1">
    <property type="entry name" value="ARGININOSUCCINATE LYASE"/>
    <property type="match status" value="1"/>
</dbReference>
<dbReference type="Pfam" id="PF14698">
    <property type="entry name" value="ASL_C2"/>
    <property type="match status" value="1"/>
</dbReference>
<dbReference type="Pfam" id="PF00206">
    <property type="entry name" value="Lyase_1"/>
    <property type="match status" value="1"/>
</dbReference>
<dbReference type="PRINTS" id="PR00145">
    <property type="entry name" value="ARGSUCLYASE"/>
</dbReference>
<dbReference type="PRINTS" id="PR00149">
    <property type="entry name" value="FUMRATELYASE"/>
</dbReference>
<dbReference type="SUPFAM" id="SSF48557">
    <property type="entry name" value="L-aspartase-like"/>
    <property type="match status" value="1"/>
</dbReference>
<dbReference type="PROSITE" id="PS00163">
    <property type="entry name" value="FUMARATE_LYASES"/>
    <property type="match status" value="1"/>
</dbReference>